<gene>
    <name evidence="1" type="primary">rplJ</name>
    <name type="ordered locus">VFMJ11_2532</name>
</gene>
<comment type="function">
    <text evidence="1">Forms part of the ribosomal stalk, playing a central role in the interaction of the ribosome with GTP-bound translation factors.</text>
</comment>
<comment type="subunit">
    <text evidence="1">Part of the ribosomal stalk of the 50S ribosomal subunit. The N-terminus interacts with L11 and the large rRNA to form the base of the stalk. The C-terminus forms an elongated spine to which L12 dimers bind in a sequential fashion forming a multimeric L10(L12)X complex.</text>
</comment>
<comment type="similarity">
    <text evidence="1">Belongs to the universal ribosomal protein uL10 family.</text>
</comment>
<dbReference type="EMBL" id="CP001139">
    <property type="protein sequence ID" value="ACH67308.1"/>
    <property type="molecule type" value="Genomic_DNA"/>
</dbReference>
<dbReference type="RefSeq" id="WP_005421324.1">
    <property type="nucleotide sequence ID" value="NC_011184.1"/>
</dbReference>
<dbReference type="KEGG" id="vfm:VFMJ11_2532"/>
<dbReference type="HOGENOM" id="CLU_092227_0_2_6"/>
<dbReference type="Proteomes" id="UP000001857">
    <property type="component" value="Chromosome I"/>
</dbReference>
<dbReference type="GO" id="GO:1990904">
    <property type="term" value="C:ribonucleoprotein complex"/>
    <property type="evidence" value="ECO:0007669"/>
    <property type="project" value="UniProtKB-KW"/>
</dbReference>
<dbReference type="GO" id="GO:0005840">
    <property type="term" value="C:ribosome"/>
    <property type="evidence" value="ECO:0007669"/>
    <property type="project" value="UniProtKB-KW"/>
</dbReference>
<dbReference type="GO" id="GO:0070180">
    <property type="term" value="F:large ribosomal subunit rRNA binding"/>
    <property type="evidence" value="ECO:0007669"/>
    <property type="project" value="UniProtKB-UniRule"/>
</dbReference>
<dbReference type="GO" id="GO:0006412">
    <property type="term" value="P:translation"/>
    <property type="evidence" value="ECO:0007669"/>
    <property type="project" value="UniProtKB-UniRule"/>
</dbReference>
<dbReference type="CDD" id="cd05797">
    <property type="entry name" value="Ribosomal_L10"/>
    <property type="match status" value="1"/>
</dbReference>
<dbReference type="FunFam" id="3.30.70.1730:FF:000001">
    <property type="entry name" value="50S ribosomal protein L10"/>
    <property type="match status" value="1"/>
</dbReference>
<dbReference type="Gene3D" id="3.30.70.1730">
    <property type="match status" value="1"/>
</dbReference>
<dbReference type="Gene3D" id="6.10.250.2350">
    <property type="match status" value="1"/>
</dbReference>
<dbReference type="HAMAP" id="MF_00362">
    <property type="entry name" value="Ribosomal_uL10"/>
    <property type="match status" value="1"/>
</dbReference>
<dbReference type="InterPro" id="IPR001790">
    <property type="entry name" value="Ribosomal_uL10"/>
</dbReference>
<dbReference type="InterPro" id="IPR043141">
    <property type="entry name" value="Ribosomal_uL10-like_sf"/>
</dbReference>
<dbReference type="InterPro" id="IPR022973">
    <property type="entry name" value="Ribosomal_uL10_bac"/>
</dbReference>
<dbReference type="InterPro" id="IPR047865">
    <property type="entry name" value="Ribosomal_uL10_bac_type"/>
</dbReference>
<dbReference type="NCBIfam" id="NF000955">
    <property type="entry name" value="PRK00099.1-1"/>
    <property type="match status" value="1"/>
</dbReference>
<dbReference type="PANTHER" id="PTHR11560">
    <property type="entry name" value="39S RIBOSOMAL PROTEIN L10, MITOCHONDRIAL"/>
    <property type="match status" value="1"/>
</dbReference>
<dbReference type="Pfam" id="PF00466">
    <property type="entry name" value="Ribosomal_L10"/>
    <property type="match status" value="1"/>
</dbReference>
<dbReference type="SUPFAM" id="SSF160369">
    <property type="entry name" value="Ribosomal protein L10-like"/>
    <property type="match status" value="1"/>
</dbReference>
<sequence>MALNLQDKKAIVAEVNEAASGALSAVVADSRGVPVAAMTVLRKQAREAGVYMKVVRNTLARRAVEGTEYECLTDTFTGPSLLAFSNEHPGAAARLFKDFAKENKDFEIKAAAFEGAVTDADVLATLPTYDEAIARLMMCMKEASAGKLVRTIAAVRDQKEEAAA</sequence>
<organism>
    <name type="scientific">Aliivibrio fischeri (strain MJ11)</name>
    <name type="common">Vibrio fischeri</name>
    <dbReference type="NCBI Taxonomy" id="388396"/>
    <lineage>
        <taxon>Bacteria</taxon>
        <taxon>Pseudomonadati</taxon>
        <taxon>Pseudomonadota</taxon>
        <taxon>Gammaproteobacteria</taxon>
        <taxon>Vibrionales</taxon>
        <taxon>Vibrionaceae</taxon>
        <taxon>Aliivibrio</taxon>
    </lineage>
</organism>
<accession>B5FC90</accession>
<evidence type="ECO:0000255" key="1">
    <source>
        <dbReference type="HAMAP-Rule" id="MF_00362"/>
    </source>
</evidence>
<evidence type="ECO:0000305" key="2"/>
<name>RL10_ALIFM</name>
<feature type="chain" id="PRO_1000121031" description="Large ribosomal subunit protein uL10">
    <location>
        <begin position="1"/>
        <end position="164"/>
    </location>
</feature>
<keyword id="KW-0687">Ribonucleoprotein</keyword>
<keyword id="KW-0689">Ribosomal protein</keyword>
<keyword id="KW-0694">RNA-binding</keyword>
<keyword id="KW-0699">rRNA-binding</keyword>
<protein>
    <recommendedName>
        <fullName evidence="1">Large ribosomal subunit protein uL10</fullName>
    </recommendedName>
    <alternativeName>
        <fullName evidence="2">50S ribosomal protein L10</fullName>
    </alternativeName>
</protein>
<proteinExistence type="inferred from homology"/>
<reference key="1">
    <citation type="submission" date="2008-08" db="EMBL/GenBank/DDBJ databases">
        <title>Complete sequence of Vibrio fischeri strain MJ11.</title>
        <authorList>
            <person name="Mandel M.J."/>
            <person name="Stabb E.V."/>
            <person name="Ruby E.G."/>
            <person name="Ferriera S."/>
            <person name="Johnson J."/>
            <person name="Kravitz S."/>
            <person name="Beeson K."/>
            <person name="Sutton G."/>
            <person name="Rogers Y.-H."/>
            <person name="Friedman R."/>
            <person name="Frazier M."/>
            <person name="Venter J.C."/>
        </authorList>
    </citation>
    <scope>NUCLEOTIDE SEQUENCE [LARGE SCALE GENOMIC DNA]</scope>
    <source>
        <strain>MJ11</strain>
    </source>
</reference>